<protein>
    <recommendedName>
        <fullName>Arginine deiminase</fullName>
        <shortName>ADI</shortName>
        <ecNumber>3.5.3.6</ecNumber>
    </recommendedName>
    <alternativeName>
        <fullName>Arginine dihydrolase</fullName>
        <shortName>AD</shortName>
    </alternativeName>
    <alternativeName>
        <fullName>Streptococcal acid glycoprotein</fullName>
    </alternativeName>
</protein>
<comment type="catalytic activity">
    <reaction>
        <text>L-arginine + H2O = L-citrulline + NH4(+)</text>
        <dbReference type="Rhea" id="RHEA:19597"/>
        <dbReference type="ChEBI" id="CHEBI:15377"/>
        <dbReference type="ChEBI" id="CHEBI:28938"/>
        <dbReference type="ChEBI" id="CHEBI:32682"/>
        <dbReference type="ChEBI" id="CHEBI:57743"/>
        <dbReference type="EC" id="3.5.3.6"/>
    </reaction>
</comment>
<comment type="pathway">
    <text>Amino-acid degradation; L-arginine degradation via ADI pathway; carbamoyl phosphate from L-arginine: step 1/2.</text>
</comment>
<comment type="subcellular location">
    <subcellularLocation>
        <location evidence="3">Cytoplasm</location>
    </subcellularLocation>
</comment>
<comment type="PTM">
    <text evidence="1">Glycosylated.</text>
</comment>
<comment type="similarity">
    <text evidence="3">Belongs to the arginine deiminase family.</text>
</comment>
<reference key="1">
    <citation type="journal article" date="2004" name="J. Infect. Dis.">
        <title>Progress toward characterization of the group A Streptococcus metagenome: complete genome sequence of a macrolide-resistant serotype M6 strain.</title>
        <authorList>
            <person name="Banks D.J."/>
            <person name="Porcella S.F."/>
            <person name="Barbian K.D."/>
            <person name="Beres S.B."/>
            <person name="Philips L.E."/>
            <person name="Voyich J.M."/>
            <person name="DeLeo F.R."/>
            <person name="Martin J.M."/>
            <person name="Somerville G.A."/>
            <person name="Musser J.M."/>
        </authorList>
    </citation>
    <scope>NUCLEOTIDE SEQUENCE [LARGE SCALE GENOMIC DNA]</scope>
    <source>
        <strain>ATCC BAA-946 / MGAS10394</strain>
    </source>
</reference>
<reference key="2">
    <citation type="submission" date="2000-05" db="UniProtKB">
        <title>Two-dimensional gel electrophoresis map of Streptococcus pyogenes proteins.</title>
        <authorList>
            <person name="Hogan D.A."/>
            <person name="Du P."/>
            <person name="Stevenson T.I."/>
            <person name="Whitton M."/>
            <person name="Kilby G.W."/>
            <person name="Rogers J."/>
            <person name="VanBogelen R.A."/>
        </authorList>
    </citation>
    <scope>PROTEIN SEQUENCE OF 2-12</scope>
    <source>
        <strain>JRS4 / Serotype M6</strain>
    </source>
</reference>
<accession>Q5XAY2</accession>
<accession>P16962</accession>
<organism>
    <name type="scientific">Streptococcus pyogenes serotype M6 (strain ATCC BAA-946 / MGAS10394)</name>
    <dbReference type="NCBI Taxonomy" id="286636"/>
    <lineage>
        <taxon>Bacteria</taxon>
        <taxon>Bacillati</taxon>
        <taxon>Bacillota</taxon>
        <taxon>Bacilli</taxon>
        <taxon>Lactobacillales</taxon>
        <taxon>Streptococcaceae</taxon>
        <taxon>Streptococcus</taxon>
    </lineage>
</organism>
<dbReference type="EC" id="3.5.3.6"/>
<dbReference type="EMBL" id="CP000003">
    <property type="protein sequence ID" value="AAT87431.1"/>
    <property type="molecule type" value="Genomic_DNA"/>
</dbReference>
<dbReference type="RefSeq" id="WP_002983803.1">
    <property type="nucleotide sequence ID" value="NC_006086.1"/>
</dbReference>
<dbReference type="SMR" id="Q5XAY2"/>
<dbReference type="GeneID" id="69900567"/>
<dbReference type="KEGG" id="spa:M6_Spy1296"/>
<dbReference type="HOGENOM" id="CLU_052662_0_1_9"/>
<dbReference type="UniPathway" id="UPA00254">
    <property type="reaction ID" value="UER00364"/>
</dbReference>
<dbReference type="Proteomes" id="UP000001167">
    <property type="component" value="Chromosome"/>
</dbReference>
<dbReference type="GO" id="GO:0005737">
    <property type="term" value="C:cytoplasm"/>
    <property type="evidence" value="ECO:0007669"/>
    <property type="project" value="UniProtKB-SubCell"/>
</dbReference>
<dbReference type="GO" id="GO:0016990">
    <property type="term" value="F:arginine deiminase activity"/>
    <property type="evidence" value="ECO:0007669"/>
    <property type="project" value="UniProtKB-UniRule"/>
</dbReference>
<dbReference type="GO" id="GO:0019547">
    <property type="term" value="P:arginine catabolic process to ornithine"/>
    <property type="evidence" value="ECO:0007669"/>
    <property type="project" value="UniProtKB-UniRule"/>
</dbReference>
<dbReference type="GO" id="GO:0019546">
    <property type="term" value="P:arginine deiminase pathway"/>
    <property type="evidence" value="ECO:0007669"/>
    <property type="project" value="TreeGrafter"/>
</dbReference>
<dbReference type="Gene3D" id="1.10.3930.10">
    <property type="entry name" value="Arginine deiminase"/>
    <property type="match status" value="1"/>
</dbReference>
<dbReference type="Gene3D" id="3.75.10.10">
    <property type="entry name" value="L-arginine/glycine Amidinotransferase, Chain A"/>
    <property type="match status" value="1"/>
</dbReference>
<dbReference type="HAMAP" id="MF_00242">
    <property type="entry name" value="Arg_deiminase"/>
    <property type="match status" value="1"/>
</dbReference>
<dbReference type="InterPro" id="IPR003876">
    <property type="entry name" value="Arg_deiminase"/>
</dbReference>
<dbReference type="NCBIfam" id="TIGR01078">
    <property type="entry name" value="arcA"/>
    <property type="match status" value="1"/>
</dbReference>
<dbReference type="NCBIfam" id="NF002381">
    <property type="entry name" value="PRK01388.1"/>
    <property type="match status" value="1"/>
</dbReference>
<dbReference type="PANTHER" id="PTHR47271">
    <property type="entry name" value="ARGININE DEIMINASE"/>
    <property type="match status" value="1"/>
</dbReference>
<dbReference type="PANTHER" id="PTHR47271:SF2">
    <property type="entry name" value="ARGININE DEIMINASE"/>
    <property type="match status" value="1"/>
</dbReference>
<dbReference type="Pfam" id="PF02274">
    <property type="entry name" value="ADI"/>
    <property type="match status" value="1"/>
</dbReference>
<dbReference type="PIRSF" id="PIRSF006356">
    <property type="entry name" value="Arg_deiminase"/>
    <property type="match status" value="1"/>
</dbReference>
<dbReference type="PRINTS" id="PR01466">
    <property type="entry name" value="ARGDEIMINASE"/>
</dbReference>
<dbReference type="SUPFAM" id="SSF55909">
    <property type="entry name" value="Pentein"/>
    <property type="match status" value="1"/>
</dbReference>
<sequence length="411" mass="46297">MTAQTPIHVYSEIGKLKKVLLHRPGKEIENLMPDYLERLLFDDIPFLEDAQKEHDAFAQALRDEGIEVLYLETLAAESLVTPEIREAFIDEYLSEANIRGRATKKAIRELLMAIEDNQELIEKTMAGVQKSELPEIPASEKGLTDLVESNYPFAIDPMPNLYFTRDPFATIGTGVSLNHMFSETRNRETLYGKYIFTHHPIYGGGKVPMVYDRNETTRIEGGDELVLSKDVLAVGISQRTDAASIEKLLVNIFKQNLGFKKVLAFEFANNRKFMHLDTVFTMVDYDKFTIHPEIEGDLRVYSVTYDNEELHIVEEKGDLAELLAANLGVEKVDLIRCGGDNLVAAGREQWNDGSNTLTIAPGVVVVYNRNTITNAILESKGLKLIKIHGSELVRGRGGPRCMSMPFEREDI</sequence>
<feature type="initiator methionine" description="Removed" evidence="2">
    <location>
        <position position="1"/>
    </location>
</feature>
<feature type="chain" id="PRO_0000182251" description="Arginine deiminase">
    <location>
        <begin position="2"/>
        <end position="411"/>
    </location>
</feature>
<feature type="active site" description="Amidino-cysteine intermediate" evidence="1">
    <location>
        <position position="401"/>
    </location>
</feature>
<name>ARCA_STRP6</name>
<proteinExistence type="evidence at protein level"/>
<keyword id="KW-0056">Arginine metabolism</keyword>
<keyword id="KW-0963">Cytoplasm</keyword>
<keyword id="KW-0903">Direct protein sequencing</keyword>
<keyword id="KW-0325">Glycoprotein</keyword>
<keyword id="KW-0378">Hydrolase</keyword>
<evidence type="ECO:0000250" key="1"/>
<evidence type="ECO:0000269" key="2">
    <source ref="2"/>
</evidence>
<evidence type="ECO:0000305" key="3"/>
<gene>
    <name type="primary">arcA</name>
    <name type="ordered locus">M6_Spy1296</name>
</gene>